<organism>
    <name type="scientific">Acinetobacter baylyi (strain ATCC 33305 / BD413 / ADP1)</name>
    <dbReference type="NCBI Taxonomy" id="62977"/>
    <lineage>
        <taxon>Bacteria</taxon>
        <taxon>Pseudomonadati</taxon>
        <taxon>Pseudomonadota</taxon>
        <taxon>Gammaproteobacteria</taxon>
        <taxon>Moraxellales</taxon>
        <taxon>Moraxellaceae</taxon>
        <taxon>Acinetobacter</taxon>
    </lineage>
</organism>
<sequence length="443" mass="48181">MSYFGTDGIRGKFGEMPITPEFALKLGFAAGKVLKRTSPINKPIVVLGKDTRLSGYILESALQAGLNAAGVYVHLLGPLPTPAIAHLTRALHADAGIVISASHNPYFDNGIKFFSGEGKKLPDSLQDEINQELEHELHIEDTANLGKSVRLIDANGRYIEFCKSTFPYHFDLRNLTIVVDCANGAAYNVGPSVFRELGAKVIALYNDPNGMNINEHCGSTHPENLQKAVVHYKADLGIAFDGDADRVILVDKFGELVDGDHILYILATQAKKKPAGIVGTVMSNMALELALAKADVPFIRAKVGDRYVLQALEENDWVTGGEPSGHILTLDKSTTGDAIIAALQVLTVMVEQNKALHELVTGFELFPQVLVNVRLDQMMDPYSVPALVSEFEQAEAQLKGRGRLLIRKSGTEPVIRVMVEGDNQKEVTDLAHRLAESVRTHAA</sequence>
<accession>Q6F717</accession>
<name>GLMM_ACIAD</name>
<evidence type="ECO:0000255" key="1">
    <source>
        <dbReference type="HAMAP-Rule" id="MF_01554"/>
    </source>
</evidence>
<feature type="chain" id="PRO_0000147834" description="Phosphoglucosamine mutase">
    <location>
        <begin position="1"/>
        <end position="443"/>
    </location>
</feature>
<feature type="active site" description="Phosphoserine intermediate" evidence="1">
    <location>
        <position position="102"/>
    </location>
</feature>
<feature type="binding site" description="via phosphate group" evidence="1">
    <location>
        <position position="102"/>
    </location>
    <ligand>
        <name>Mg(2+)</name>
        <dbReference type="ChEBI" id="CHEBI:18420"/>
    </ligand>
</feature>
<feature type="binding site" evidence="1">
    <location>
        <position position="241"/>
    </location>
    <ligand>
        <name>Mg(2+)</name>
        <dbReference type="ChEBI" id="CHEBI:18420"/>
    </ligand>
</feature>
<feature type="binding site" evidence="1">
    <location>
        <position position="243"/>
    </location>
    <ligand>
        <name>Mg(2+)</name>
        <dbReference type="ChEBI" id="CHEBI:18420"/>
    </ligand>
</feature>
<feature type="binding site" evidence="1">
    <location>
        <position position="245"/>
    </location>
    <ligand>
        <name>Mg(2+)</name>
        <dbReference type="ChEBI" id="CHEBI:18420"/>
    </ligand>
</feature>
<feature type="modified residue" description="Phosphoserine" evidence="1">
    <location>
        <position position="102"/>
    </location>
</feature>
<reference key="1">
    <citation type="journal article" date="2004" name="Nucleic Acids Res.">
        <title>Unique features revealed by the genome sequence of Acinetobacter sp. ADP1, a versatile and naturally transformation competent bacterium.</title>
        <authorList>
            <person name="Barbe V."/>
            <person name="Vallenet D."/>
            <person name="Fonknechten N."/>
            <person name="Kreimeyer A."/>
            <person name="Oztas S."/>
            <person name="Labarre L."/>
            <person name="Cruveiller S."/>
            <person name="Robert C."/>
            <person name="Duprat S."/>
            <person name="Wincker P."/>
            <person name="Ornston L.N."/>
            <person name="Weissenbach J."/>
            <person name="Marliere P."/>
            <person name="Cohen G.N."/>
            <person name="Medigue C."/>
        </authorList>
    </citation>
    <scope>NUCLEOTIDE SEQUENCE [LARGE SCALE GENOMIC DNA]</scope>
    <source>
        <strain>ATCC 33305 / BD413 / ADP1</strain>
    </source>
</reference>
<keyword id="KW-0413">Isomerase</keyword>
<keyword id="KW-0460">Magnesium</keyword>
<keyword id="KW-0479">Metal-binding</keyword>
<keyword id="KW-0597">Phosphoprotein</keyword>
<comment type="function">
    <text evidence="1">Catalyzes the conversion of glucosamine-6-phosphate to glucosamine-1-phosphate.</text>
</comment>
<comment type="catalytic activity">
    <reaction evidence="1">
        <text>alpha-D-glucosamine 1-phosphate = D-glucosamine 6-phosphate</text>
        <dbReference type="Rhea" id="RHEA:23424"/>
        <dbReference type="ChEBI" id="CHEBI:58516"/>
        <dbReference type="ChEBI" id="CHEBI:58725"/>
        <dbReference type="EC" id="5.4.2.10"/>
    </reaction>
</comment>
<comment type="cofactor">
    <cofactor evidence="1">
        <name>Mg(2+)</name>
        <dbReference type="ChEBI" id="CHEBI:18420"/>
    </cofactor>
    <text evidence="1">Binds 1 Mg(2+) ion per subunit.</text>
</comment>
<comment type="PTM">
    <text evidence="1">Activated by phosphorylation.</text>
</comment>
<comment type="similarity">
    <text evidence="1">Belongs to the phosphohexose mutase family.</text>
</comment>
<gene>
    <name evidence="1" type="primary">glmM</name>
    <name type="ordered locus">ACIAD3502</name>
</gene>
<protein>
    <recommendedName>
        <fullName evidence="1">Phosphoglucosamine mutase</fullName>
        <ecNumber evidence="1">5.4.2.10</ecNumber>
    </recommendedName>
</protein>
<dbReference type="EC" id="5.4.2.10" evidence="1"/>
<dbReference type="EMBL" id="CR543861">
    <property type="protein sequence ID" value="CAG70148.1"/>
    <property type="molecule type" value="Genomic_DNA"/>
</dbReference>
<dbReference type="RefSeq" id="WP_004923367.1">
    <property type="nucleotide sequence ID" value="NC_005966.1"/>
</dbReference>
<dbReference type="SMR" id="Q6F717"/>
<dbReference type="STRING" id="202950.GCA_001485005_01708"/>
<dbReference type="GeneID" id="45235681"/>
<dbReference type="KEGG" id="aci:ACIAD3502"/>
<dbReference type="eggNOG" id="COG1109">
    <property type="taxonomic scope" value="Bacteria"/>
</dbReference>
<dbReference type="HOGENOM" id="CLU_016950_7_0_6"/>
<dbReference type="OrthoDB" id="9803322at2"/>
<dbReference type="BioCyc" id="ASP62977:ACIAD_RS15835-MONOMER"/>
<dbReference type="Proteomes" id="UP000000430">
    <property type="component" value="Chromosome"/>
</dbReference>
<dbReference type="GO" id="GO:0005829">
    <property type="term" value="C:cytosol"/>
    <property type="evidence" value="ECO:0007669"/>
    <property type="project" value="TreeGrafter"/>
</dbReference>
<dbReference type="GO" id="GO:0000287">
    <property type="term" value="F:magnesium ion binding"/>
    <property type="evidence" value="ECO:0007669"/>
    <property type="project" value="UniProtKB-UniRule"/>
</dbReference>
<dbReference type="GO" id="GO:0008966">
    <property type="term" value="F:phosphoglucosamine mutase activity"/>
    <property type="evidence" value="ECO:0007669"/>
    <property type="project" value="UniProtKB-UniRule"/>
</dbReference>
<dbReference type="GO" id="GO:0004615">
    <property type="term" value="F:phosphomannomutase activity"/>
    <property type="evidence" value="ECO:0007669"/>
    <property type="project" value="TreeGrafter"/>
</dbReference>
<dbReference type="GO" id="GO:0005975">
    <property type="term" value="P:carbohydrate metabolic process"/>
    <property type="evidence" value="ECO:0007669"/>
    <property type="project" value="InterPro"/>
</dbReference>
<dbReference type="GO" id="GO:0009252">
    <property type="term" value="P:peptidoglycan biosynthetic process"/>
    <property type="evidence" value="ECO:0007669"/>
    <property type="project" value="TreeGrafter"/>
</dbReference>
<dbReference type="GO" id="GO:0006048">
    <property type="term" value="P:UDP-N-acetylglucosamine biosynthetic process"/>
    <property type="evidence" value="ECO:0007669"/>
    <property type="project" value="TreeGrafter"/>
</dbReference>
<dbReference type="CDD" id="cd05802">
    <property type="entry name" value="GlmM"/>
    <property type="match status" value="1"/>
</dbReference>
<dbReference type="FunFam" id="3.30.310.50:FF:000001">
    <property type="entry name" value="Phosphoglucosamine mutase"/>
    <property type="match status" value="1"/>
</dbReference>
<dbReference type="FunFam" id="3.40.120.10:FF:000001">
    <property type="entry name" value="Phosphoglucosamine mutase"/>
    <property type="match status" value="1"/>
</dbReference>
<dbReference type="FunFam" id="3.40.120.10:FF:000003">
    <property type="entry name" value="Phosphoglucosamine mutase"/>
    <property type="match status" value="1"/>
</dbReference>
<dbReference type="Gene3D" id="3.40.120.10">
    <property type="entry name" value="Alpha-D-Glucose-1,6-Bisphosphate, subunit A, domain 3"/>
    <property type="match status" value="3"/>
</dbReference>
<dbReference type="Gene3D" id="3.30.310.50">
    <property type="entry name" value="Alpha-D-phosphohexomutase, C-terminal domain"/>
    <property type="match status" value="1"/>
</dbReference>
<dbReference type="HAMAP" id="MF_01554_B">
    <property type="entry name" value="GlmM_B"/>
    <property type="match status" value="1"/>
</dbReference>
<dbReference type="InterPro" id="IPR005844">
    <property type="entry name" value="A-D-PHexomutase_a/b/a-I"/>
</dbReference>
<dbReference type="InterPro" id="IPR016055">
    <property type="entry name" value="A-D-PHexomutase_a/b/a-I/II/III"/>
</dbReference>
<dbReference type="InterPro" id="IPR005845">
    <property type="entry name" value="A-D-PHexomutase_a/b/a-II"/>
</dbReference>
<dbReference type="InterPro" id="IPR005846">
    <property type="entry name" value="A-D-PHexomutase_a/b/a-III"/>
</dbReference>
<dbReference type="InterPro" id="IPR005843">
    <property type="entry name" value="A-D-PHexomutase_C"/>
</dbReference>
<dbReference type="InterPro" id="IPR036900">
    <property type="entry name" value="A-D-PHexomutase_C_sf"/>
</dbReference>
<dbReference type="InterPro" id="IPR016066">
    <property type="entry name" value="A-D-PHexomutase_CS"/>
</dbReference>
<dbReference type="InterPro" id="IPR005841">
    <property type="entry name" value="Alpha-D-phosphohexomutase_SF"/>
</dbReference>
<dbReference type="InterPro" id="IPR006352">
    <property type="entry name" value="GlmM_bact"/>
</dbReference>
<dbReference type="InterPro" id="IPR050060">
    <property type="entry name" value="Phosphoglucosamine_mutase"/>
</dbReference>
<dbReference type="NCBIfam" id="TIGR01455">
    <property type="entry name" value="glmM"/>
    <property type="match status" value="1"/>
</dbReference>
<dbReference type="NCBIfam" id="NF008139">
    <property type="entry name" value="PRK10887.1"/>
    <property type="match status" value="1"/>
</dbReference>
<dbReference type="PANTHER" id="PTHR42946:SF1">
    <property type="entry name" value="PHOSPHOGLUCOMUTASE (ALPHA-D-GLUCOSE-1,6-BISPHOSPHATE-DEPENDENT)"/>
    <property type="match status" value="1"/>
</dbReference>
<dbReference type="PANTHER" id="PTHR42946">
    <property type="entry name" value="PHOSPHOHEXOSE MUTASE"/>
    <property type="match status" value="1"/>
</dbReference>
<dbReference type="Pfam" id="PF02878">
    <property type="entry name" value="PGM_PMM_I"/>
    <property type="match status" value="1"/>
</dbReference>
<dbReference type="Pfam" id="PF02879">
    <property type="entry name" value="PGM_PMM_II"/>
    <property type="match status" value="1"/>
</dbReference>
<dbReference type="Pfam" id="PF02880">
    <property type="entry name" value="PGM_PMM_III"/>
    <property type="match status" value="1"/>
</dbReference>
<dbReference type="Pfam" id="PF00408">
    <property type="entry name" value="PGM_PMM_IV"/>
    <property type="match status" value="1"/>
</dbReference>
<dbReference type="PRINTS" id="PR00509">
    <property type="entry name" value="PGMPMM"/>
</dbReference>
<dbReference type="SUPFAM" id="SSF55957">
    <property type="entry name" value="Phosphoglucomutase, C-terminal domain"/>
    <property type="match status" value="1"/>
</dbReference>
<dbReference type="SUPFAM" id="SSF53738">
    <property type="entry name" value="Phosphoglucomutase, first 3 domains"/>
    <property type="match status" value="3"/>
</dbReference>
<dbReference type="PROSITE" id="PS00710">
    <property type="entry name" value="PGM_PMM"/>
    <property type="match status" value="1"/>
</dbReference>
<proteinExistence type="inferred from homology"/>